<evidence type="ECO:0000255" key="1">
    <source>
        <dbReference type="HAMAP-Rule" id="MF_00402"/>
    </source>
</evidence>
<evidence type="ECO:0000305" key="2"/>
<feature type="chain" id="PRO_1000049760" description="Large ribosomal subunit protein bL19">
    <location>
        <begin position="1"/>
        <end position="127"/>
    </location>
</feature>
<gene>
    <name evidence="1" type="primary">rplS</name>
    <name evidence="1" type="synonym">rpl19</name>
    <name type="ordered locus">Tery_0268</name>
</gene>
<organism>
    <name type="scientific">Trichodesmium erythraeum (strain IMS101)</name>
    <dbReference type="NCBI Taxonomy" id="203124"/>
    <lineage>
        <taxon>Bacteria</taxon>
        <taxon>Bacillati</taxon>
        <taxon>Cyanobacteriota</taxon>
        <taxon>Cyanophyceae</taxon>
        <taxon>Oscillatoriophycideae</taxon>
        <taxon>Oscillatoriales</taxon>
        <taxon>Microcoleaceae</taxon>
        <taxon>Trichodesmium</taxon>
    </lineage>
</organism>
<name>RL19_TRIEI</name>
<comment type="function">
    <text evidence="1">This protein is located at the 30S-50S ribosomal subunit interface and may play a role in the structure and function of the aminoacyl-tRNA binding site.</text>
</comment>
<comment type="similarity">
    <text evidence="1">Belongs to the bacterial ribosomal protein bL19 family.</text>
</comment>
<proteinExistence type="inferred from homology"/>
<accession>Q119S3</accession>
<reference key="1">
    <citation type="journal article" date="2015" name="Proc. Natl. Acad. Sci. U.S.A.">
        <title>Trichodesmium genome maintains abundant, widespread noncoding DNA in situ, despite oligotrophic lifestyle.</title>
        <authorList>
            <person name="Walworth N."/>
            <person name="Pfreundt U."/>
            <person name="Nelson W.C."/>
            <person name="Mincer T."/>
            <person name="Heidelberg J.F."/>
            <person name="Fu F."/>
            <person name="Waterbury J.B."/>
            <person name="Glavina del Rio T."/>
            <person name="Goodwin L."/>
            <person name="Kyrpides N.C."/>
            <person name="Land M.L."/>
            <person name="Woyke T."/>
            <person name="Hutchins D.A."/>
            <person name="Hess W.R."/>
            <person name="Webb E.A."/>
        </authorList>
    </citation>
    <scope>NUCLEOTIDE SEQUENCE [LARGE SCALE GENOMIC DNA]</scope>
    <source>
        <strain>IMS101</strain>
    </source>
</reference>
<sequence>MKAQEIISSIEAEEIEKLKQNSKKKIPLLYVGDTVKVGVKIIEGGKERVQPYEGTIIAMRNGGINETITVRRVFQGVGVERVFLLHSPRIANIKLIRRGKVRRAKLYYLRGRVGKATRVKQRFDRSL</sequence>
<keyword id="KW-0687">Ribonucleoprotein</keyword>
<keyword id="KW-0689">Ribosomal protein</keyword>
<protein>
    <recommendedName>
        <fullName evidence="1">Large ribosomal subunit protein bL19</fullName>
    </recommendedName>
    <alternativeName>
        <fullName evidence="2">50S ribosomal protein L19</fullName>
    </alternativeName>
</protein>
<dbReference type="EMBL" id="CP000393">
    <property type="protein sequence ID" value="ABG49751.1"/>
    <property type="molecule type" value="Genomic_DNA"/>
</dbReference>
<dbReference type="RefSeq" id="WP_011610147.1">
    <property type="nucleotide sequence ID" value="NC_008312.1"/>
</dbReference>
<dbReference type="SMR" id="Q119S3"/>
<dbReference type="STRING" id="203124.Tery_0268"/>
<dbReference type="KEGG" id="ter:Tery_0268"/>
<dbReference type="eggNOG" id="COG0335">
    <property type="taxonomic scope" value="Bacteria"/>
</dbReference>
<dbReference type="HOGENOM" id="CLU_103507_2_0_3"/>
<dbReference type="OrthoDB" id="9803541at2"/>
<dbReference type="GO" id="GO:0022625">
    <property type="term" value="C:cytosolic large ribosomal subunit"/>
    <property type="evidence" value="ECO:0007669"/>
    <property type="project" value="TreeGrafter"/>
</dbReference>
<dbReference type="GO" id="GO:0003735">
    <property type="term" value="F:structural constituent of ribosome"/>
    <property type="evidence" value="ECO:0007669"/>
    <property type="project" value="InterPro"/>
</dbReference>
<dbReference type="GO" id="GO:0006412">
    <property type="term" value="P:translation"/>
    <property type="evidence" value="ECO:0007669"/>
    <property type="project" value="UniProtKB-UniRule"/>
</dbReference>
<dbReference type="FunFam" id="2.30.30.790:FF:000004">
    <property type="entry name" value="50S ribosomal protein L19, chloroplastic"/>
    <property type="match status" value="1"/>
</dbReference>
<dbReference type="Gene3D" id="2.30.30.790">
    <property type="match status" value="1"/>
</dbReference>
<dbReference type="HAMAP" id="MF_00402">
    <property type="entry name" value="Ribosomal_bL19"/>
    <property type="match status" value="1"/>
</dbReference>
<dbReference type="InterPro" id="IPR001857">
    <property type="entry name" value="Ribosomal_bL19"/>
</dbReference>
<dbReference type="InterPro" id="IPR018257">
    <property type="entry name" value="Ribosomal_bL19_CS"/>
</dbReference>
<dbReference type="InterPro" id="IPR038657">
    <property type="entry name" value="Ribosomal_bL19_sf"/>
</dbReference>
<dbReference type="InterPro" id="IPR008991">
    <property type="entry name" value="Translation_prot_SH3-like_sf"/>
</dbReference>
<dbReference type="NCBIfam" id="TIGR01024">
    <property type="entry name" value="rplS_bact"/>
    <property type="match status" value="1"/>
</dbReference>
<dbReference type="PANTHER" id="PTHR15680:SF9">
    <property type="entry name" value="LARGE RIBOSOMAL SUBUNIT PROTEIN BL19M"/>
    <property type="match status" value="1"/>
</dbReference>
<dbReference type="PANTHER" id="PTHR15680">
    <property type="entry name" value="RIBOSOMAL PROTEIN L19"/>
    <property type="match status" value="1"/>
</dbReference>
<dbReference type="Pfam" id="PF01245">
    <property type="entry name" value="Ribosomal_L19"/>
    <property type="match status" value="1"/>
</dbReference>
<dbReference type="PIRSF" id="PIRSF002191">
    <property type="entry name" value="Ribosomal_L19"/>
    <property type="match status" value="1"/>
</dbReference>
<dbReference type="PRINTS" id="PR00061">
    <property type="entry name" value="RIBOSOMALL19"/>
</dbReference>
<dbReference type="SUPFAM" id="SSF50104">
    <property type="entry name" value="Translation proteins SH3-like domain"/>
    <property type="match status" value="1"/>
</dbReference>
<dbReference type="PROSITE" id="PS01015">
    <property type="entry name" value="RIBOSOMAL_L19"/>
    <property type="match status" value="1"/>
</dbReference>